<reference key="1">
    <citation type="journal article" date="2007" name="Proc. Natl. Acad. Sci. U.S.A.">
        <title>The genome of Syntrophus aciditrophicus: life at the thermodynamic limit of microbial growth.</title>
        <authorList>
            <person name="McInerney M.J."/>
            <person name="Rohlin L."/>
            <person name="Mouttaki H."/>
            <person name="Kim U."/>
            <person name="Krupp R.S."/>
            <person name="Rios-Hernandez L."/>
            <person name="Sieber J."/>
            <person name="Struchtemeyer C.G."/>
            <person name="Bhattacharyya A."/>
            <person name="Campbell J.W."/>
            <person name="Gunsalus R.P."/>
        </authorList>
    </citation>
    <scope>NUCLEOTIDE SEQUENCE [LARGE SCALE GENOMIC DNA]</scope>
    <source>
        <strain>SB</strain>
    </source>
</reference>
<sequence length="293" mass="31630">MDKKRYELNVQLAQMLKGGVIMDVTNVEQARIAEDAGAVAVMALERVPADIRAQGGVARMSDPSMIVEIKKSVSIPVMAKARIGHFVEAQILEALKIDYIDESEVLTPADEECHIDKTRFSIPFVCGARNLGEALRRIAEGAAMIRTKGEAGTGNVVEAVRHMRTMNREIRQLVGMPVEEVTVFAKSNGIPYELALQVRGLGRLPVVNFAAGGIATPADAALMMQLGCDGVFVGSGIFKSSNPDRRARAIVKATAYFNDAAKVLEASLDLGEAMPVLEIAQIPEDQILATRGW</sequence>
<accession>Q2LXR2</accession>
<keyword id="KW-0456">Lyase</keyword>
<keyword id="KW-0663">Pyridoxal phosphate</keyword>
<keyword id="KW-1185">Reference proteome</keyword>
<keyword id="KW-0704">Schiff base</keyword>
<evidence type="ECO:0000255" key="1">
    <source>
        <dbReference type="HAMAP-Rule" id="MF_01824"/>
    </source>
</evidence>
<feature type="chain" id="PRO_1000070401" description="Pyridoxal 5'-phosphate synthase subunit PdxS">
    <location>
        <begin position="1"/>
        <end position="293"/>
    </location>
</feature>
<feature type="active site" description="Schiff-base intermediate with D-ribose 5-phosphate" evidence="1">
    <location>
        <position position="80"/>
    </location>
</feature>
<feature type="binding site" evidence="1">
    <location>
        <position position="23"/>
    </location>
    <ligand>
        <name>D-ribose 5-phosphate</name>
        <dbReference type="ChEBI" id="CHEBI:78346"/>
    </ligand>
</feature>
<feature type="binding site" evidence="1">
    <location>
        <position position="152"/>
    </location>
    <ligand>
        <name>D-ribose 5-phosphate</name>
        <dbReference type="ChEBI" id="CHEBI:78346"/>
    </ligand>
</feature>
<feature type="binding site" evidence="1">
    <location>
        <position position="164"/>
    </location>
    <ligand>
        <name>D-glyceraldehyde 3-phosphate</name>
        <dbReference type="ChEBI" id="CHEBI:59776"/>
    </ligand>
</feature>
<feature type="binding site" evidence="1">
    <location>
        <position position="213"/>
    </location>
    <ligand>
        <name>D-ribose 5-phosphate</name>
        <dbReference type="ChEBI" id="CHEBI:78346"/>
    </ligand>
</feature>
<feature type="binding site" evidence="1">
    <location>
        <begin position="234"/>
        <end position="235"/>
    </location>
    <ligand>
        <name>D-ribose 5-phosphate</name>
        <dbReference type="ChEBI" id="CHEBI:78346"/>
    </ligand>
</feature>
<comment type="function">
    <text evidence="1">Catalyzes the formation of pyridoxal 5'-phosphate from ribose 5-phosphate (RBP), glyceraldehyde 3-phosphate (G3P) and ammonia. The ammonia is provided by the PdxT subunit. Can also use ribulose 5-phosphate and dihydroxyacetone phosphate as substrates, resulting from enzyme-catalyzed isomerization of RBP and G3P, respectively.</text>
</comment>
<comment type="catalytic activity">
    <reaction evidence="1">
        <text>aldehydo-D-ribose 5-phosphate + D-glyceraldehyde 3-phosphate + L-glutamine = pyridoxal 5'-phosphate + L-glutamate + phosphate + 3 H2O + H(+)</text>
        <dbReference type="Rhea" id="RHEA:31507"/>
        <dbReference type="ChEBI" id="CHEBI:15377"/>
        <dbReference type="ChEBI" id="CHEBI:15378"/>
        <dbReference type="ChEBI" id="CHEBI:29985"/>
        <dbReference type="ChEBI" id="CHEBI:43474"/>
        <dbReference type="ChEBI" id="CHEBI:58273"/>
        <dbReference type="ChEBI" id="CHEBI:58359"/>
        <dbReference type="ChEBI" id="CHEBI:59776"/>
        <dbReference type="ChEBI" id="CHEBI:597326"/>
        <dbReference type="EC" id="4.3.3.6"/>
    </reaction>
</comment>
<comment type="pathway">
    <text evidence="1">Cofactor biosynthesis; pyridoxal 5'-phosphate biosynthesis.</text>
</comment>
<comment type="subunit">
    <text evidence="1">In the presence of PdxT, forms a dodecamer of heterodimers.</text>
</comment>
<comment type="similarity">
    <text evidence="1">Belongs to the PdxS/SNZ family.</text>
</comment>
<gene>
    <name evidence="1" type="primary">pdxS</name>
    <name type="ordered locus">SYNAS_29970</name>
    <name type="ORF">SYN_01685</name>
</gene>
<dbReference type="EC" id="4.3.3.6" evidence="1"/>
<dbReference type="EMBL" id="CP000252">
    <property type="protein sequence ID" value="ABC78876.1"/>
    <property type="molecule type" value="Genomic_DNA"/>
</dbReference>
<dbReference type="RefSeq" id="WP_011418892.1">
    <property type="nucleotide sequence ID" value="NC_007759.1"/>
</dbReference>
<dbReference type="SMR" id="Q2LXR2"/>
<dbReference type="STRING" id="56780.SYN_01685"/>
<dbReference type="KEGG" id="sat:SYN_01685"/>
<dbReference type="eggNOG" id="COG0214">
    <property type="taxonomic scope" value="Bacteria"/>
</dbReference>
<dbReference type="HOGENOM" id="CLU_055352_1_0_7"/>
<dbReference type="InParanoid" id="Q2LXR2"/>
<dbReference type="OrthoDB" id="9772545at2"/>
<dbReference type="UniPathway" id="UPA00245"/>
<dbReference type="Proteomes" id="UP000001933">
    <property type="component" value="Chromosome"/>
</dbReference>
<dbReference type="GO" id="GO:0036381">
    <property type="term" value="F:pyridoxal 5'-phosphate synthase (glutamine hydrolysing) activity"/>
    <property type="evidence" value="ECO:0007669"/>
    <property type="project" value="UniProtKB-UniRule"/>
</dbReference>
<dbReference type="GO" id="GO:0006520">
    <property type="term" value="P:amino acid metabolic process"/>
    <property type="evidence" value="ECO:0007669"/>
    <property type="project" value="TreeGrafter"/>
</dbReference>
<dbReference type="GO" id="GO:0042823">
    <property type="term" value="P:pyridoxal phosphate biosynthetic process"/>
    <property type="evidence" value="ECO:0007669"/>
    <property type="project" value="UniProtKB-UniRule"/>
</dbReference>
<dbReference type="GO" id="GO:0008615">
    <property type="term" value="P:pyridoxine biosynthetic process"/>
    <property type="evidence" value="ECO:0007669"/>
    <property type="project" value="TreeGrafter"/>
</dbReference>
<dbReference type="CDD" id="cd04727">
    <property type="entry name" value="pdxS"/>
    <property type="match status" value="1"/>
</dbReference>
<dbReference type="FunFam" id="3.20.20.70:FF:000001">
    <property type="entry name" value="Pyridoxine biosynthesis protein PDX1"/>
    <property type="match status" value="1"/>
</dbReference>
<dbReference type="Gene3D" id="3.20.20.70">
    <property type="entry name" value="Aldolase class I"/>
    <property type="match status" value="1"/>
</dbReference>
<dbReference type="HAMAP" id="MF_01824">
    <property type="entry name" value="PdxS"/>
    <property type="match status" value="1"/>
</dbReference>
<dbReference type="InterPro" id="IPR013785">
    <property type="entry name" value="Aldolase_TIM"/>
</dbReference>
<dbReference type="InterPro" id="IPR001852">
    <property type="entry name" value="PdxS/SNZ"/>
</dbReference>
<dbReference type="InterPro" id="IPR033755">
    <property type="entry name" value="PdxS/SNZ_N"/>
</dbReference>
<dbReference type="InterPro" id="IPR011060">
    <property type="entry name" value="RibuloseP-bd_barrel"/>
</dbReference>
<dbReference type="NCBIfam" id="NF003215">
    <property type="entry name" value="PRK04180.1"/>
    <property type="match status" value="1"/>
</dbReference>
<dbReference type="NCBIfam" id="TIGR00343">
    <property type="entry name" value="pyridoxal 5'-phosphate synthase lyase subunit PdxS"/>
    <property type="match status" value="1"/>
</dbReference>
<dbReference type="PANTHER" id="PTHR31829">
    <property type="entry name" value="PYRIDOXAL 5'-PHOSPHATE SYNTHASE SUBUNIT SNZ1-RELATED"/>
    <property type="match status" value="1"/>
</dbReference>
<dbReference type="PANTHER" id="PTHR31829:SF0">
    <property type="entry name" value="PYRIDOXAL 5'-PHOSPHATE SYNTHASE SUBUNIT SNZ1-RELATED"/>
    <property type="match status" value="1"/>
</dbReference>
<dbReference type="Pfam" id="PF01680">
    <property type="entry name" value="SOR_SNZ"/>
    <property type="match status" value="1"/>
</dbReference>
<dbReference type="PIRSF" id="PIRSF029271">
    <property type="entry name" value="Pdx1"/>
    <property type="match status" value="1"/>
</dbReference>
<dbReference type="SUPFAM" id="SSF51366">
    <property type="entry name" value="Ribulose-phoshate binding barrel"/>
    <property type="match status" value="1"/>
</dbReference>
<dbReference type="PROSITE" id="PS01235">
    <property type="entry name" value="PDXS_SNZ_1"/>
    <property type="match status" value="1"/>
</dbReference>
<dbReference type="PROSITE" id="PS51129">
    <property type="entry name" value="PDXS_SNZ_2"/>
    <property type="match status" value="1"/>
</dbReference>
<protein>
    <recommendedName>
        <fullName evidence="1">Pyridoxal 5'-phosphate synthase subunit PdxS</fullName>
        <shortName evidence="1">PLP synthase subunit PdxS</shortName>
        <ecNumber evidence="1">4.3.3.6</ecNumber>
    </recommendedName>
    <alternativeName>
        <fullName evidence="1">Pdx1</fullName>
    </alternativeName>
</protein>
<name>PDXS_SYNAS</name>
<organism>
    <name type="scientific">Syntrophus aciditrophicus (strain SB)</name>
    <dbReference type="NCBI Taxonomy" id="56780"/>
    <lineage>
        <taxon>Bacteria</taxon>
        <taxon>Pseudomonadati</taxon>
        <taxon>Thermodesulfobacteriota</taxon>
        <taxon>Syntrophia</taxon>
        <taxon>Syntrophales</taxon>
        <taxon>Syntrophaceae</taxon>
        <taxon>Syntrophus</taxon>
    </lineage>
</organism>
<proteinExistence type="inferred from homology"/>